<reference key="1">
    <citation type="journal article" date="1995" name="Development">
        <title>Neural crest cell-cell adhesion controlled by sequential and subpopulation-specific expression of novel cadherins.</title>
        <authorList>
            <person name="Nakagawa S."/>
            <person name="Takeichi M."/>
        </authorList>
    </citation>
    <scope>NUCLEOTIDE SEQUENCE [MRNA]</scope>
    <scope>DEVELOPMENTAL STAGE</scope>
    <source>
        <strain>White leghorn</strain>
        <tissue>Brain</tissue>
    </source>
</reference>
<accession>Q90762</accession>
<proteinExistence type="evidence at transcript level"/>
<evidence type="ECO:0000250" key="1"/>
<evidence type="ECO:0000255" key="2"/>
<evidence type="ECO:0000255" key="3">
    <source>
        <dbReference type="PROSITE-ProRule" id="PRU00043"/>
    </source>
</evidence>
<evidence type="ECO:0000256" key="4">
    <source>
        <dbReference type="SAM" id="MobiDB-lite"/>
    </source>
</evidence>
<evidence type="ECO:0000269" key="5">
    <source>
    </source>
</evidence>
<evidence type="ECO:0000305" key="6"/>
<organism>
    <name type="scientific">Gallus gallus</name>
    <name type="common">Chicken</name>
    <dbReference type="NCBI Taxonomy" id="9031"/>
    <lineage>
        <taxon>Eukaryota</taxon>
        <taxon>Metazoa</taxon>
        <taxon>Chordata</taxon>
        <taxon>Craniata</taxon>
        <taxon>Vertebrata</taxon>
        <taxon>Euteleostomi</taxon>
        <taxon>Archelosauria</taxon>
        <taxon>Archosauria</taxon>
        <taxon>Dinosauria</taxon>
        <taxon>Saurischia</taxon>
        <taxon>Theropoda</taxon>
        <taxon>Coelurosauria</taxon>
        <taxon>Aves</taxon>
        <taxon>Neognathae</taxon>
        <taxon>Galloanserae</taxon>
        <taxon>Galliformes</taxon>
        <taxon>Phasianidae</taxon>
        <taxon>Phasianinae</taxon>
        <taxon>Gallus</taxon>
    </lineage>
</organism>
<protein>
    <recommendedName>
        <fullName>Cadherin-6</fullName>
    </recommendedName>
    <alternativeName>
        <fullName>Cadherin-6B</fullName>
        <shortName>c-cad6B</shortName>
    </alternativeName>
</protein>
<dbReference type="EMBL" id="D42149">
    <property type="protein sequence ID" value="BAA07720.1"/>
    <property type="molecule type" value="mRNA"/>
</dbReference>
<dbReference type="PIR" id="I50178">
    <property type="entry name" value="I50178"/>
</dbReference>
<dbReference type="RefSeq" id="NP_001001758.1">
    <property type="nucleotide sequence ID" value="NM_001001758.3"/>
</dbReference>
<dbReference type="RefSeq" id="XP_025002850.1">
    <property type="nucleotide sequence ID" value="XM_025147082.3"/>
</dbReference>
<dbReference type="RefSeq" id="XP_040533278.1">
    <property type="nucleotide sequence ID" value="XM_040677344.2"/>
</dbReference>
<dbReference type="RefSeq" id="XP_040533286.1">
    <property type="nucleotide sequence ID" value="XM_040677352.2"/>
</dbReference>
<dbReference type="RefSeq" id="XP_046775586.1">
    <property type="nucleotide sequence ID" value="XM_046919630.1"/>
</dbReference>
<dbReference type="RefSeq" id="XP_046775591.1">
    <property type="nucleotide sequence ID" value="XM_046919635.1"/>
</dbReference>
<dbReference type="RefSeq" id="XP_046775592.1">
    <property type="nucleotide sequence ID" value="XM_046919636.1"/>
</dbReference>
<dbReference type="SMR" id="Q90762"/>
<dbReference type="FunCoup" id="Q90762">
    <property type="interactions" value="1"/>
</dbReference>
<dbReference type="STRING" id="9031.ENSGALP00000030382"/>
<dbReference type="GlyCosmos" id="Q90762">
    <property type="glycosylation" value="5 sites, No reported glycans"/>
</dbReference>
<dbReference type="GlyGen" id="Q90762">
    <property type="glycosylation" value="6 sites"/>
</dbReference>
<dbReference type="PaxDb" id="9031-ENSGALP00000030382"/>
<dbReference type="Ensembl" id="ENSGALT00010026451.1">
    <property type="protein sequence ID" value="ENSGALP00010015057.1"/>
    <property type="gene ID" value="ENSGALG00010011040.1"/>
</dbReference>
<dbReference type="GeneID" id="414842"/>
<dbReference type="KEGG" id="gga:414842"/>
<dbReference type="CTD" id="1004"/>
<dbReference type="VEuPathDB" id="HostDB:geneid_414842"/>
<dbReference type="eggNOG" id="KOG3594">
    <property type="taxonomic scope" value="Eukaryota"/>
</dbReference>
<dbReference type="GeneTree" id="ENSGT00940000154673"/>
<dbReference type="HOGENOM" id="CLU_005284_3_1_1"/>
<dbReference type="InParanoid" id="Q90762"/>
<dbReference type="OMA" id="RQDLHRS"/>
<dbReference type="OrthoDB" id="6252479at2759"/>
<dbReference type="PhylomeDB" id="Q90762"/>
<dbReference type="TreeFam" id="TF329887"/>
<dbReference type="Reactome" id="R-GGA-418990">
    <property type="pathway name" value="Adherens junctions interactions"/>
</dbReference>
<dbReference type="PRO" id="PR:Q90762"/>
<dbReference type="Proteomes" id="UP000000539">
    <property type="component" value="Chromosome 2"/>
</dbReference>
<dbReference type="Bgee" id="ENSGALG00000012917">
    <property type="expression patterns" value="Expressed in brain and 4 other cell types or tissues"/>
</dbReference>
<dbReference type="GO" id="GO:0005912">
    <property type="term" value="C:adherens junction"/>
    <property type="evidence" value="ECO:0000318"/>
    <property type="project" value="GO_Central"/>
</dbReference>
<dbReference type="GO" id="GO:0016342">
    <property type="term" value="C:catenin complex"/>
    <property type="evidence" value="ECO:0000318"/>
    <property type="project" value="GO_Central"/>
</dbReference>
<dbReference type="GO" id="GO:0098978">
    <property type="term" value="C:glutamatergic synapse"/>
    <property type="evidence" value="ECO:0007669"/>
    <property type="project" value="Ensembl"/>
</dbReference>
<dbReference type="GO" id="GO:0005654">
    <property type="term" value="C:nucleoplasm"/>
    <property type="evidence" value="ECO:0007669"/>
    <property type="project" value="Ensembl"/>
</dbReference>
<dbReference type="GO" id="GO:0008013">
    <property type="term" value="F:beta-catenin binding"/>
    <property type="evidence" value="ECO:0000318"/>
    <property type="project" value="GO_Central"/>
</dbReference>
<dbReference type="GO" id="GO:0045296">
    <property type="term" value="F:cadherin binding"/>
    <property type="evidence" value="ECO:0000318"/>
    <property type="project" value="GO_Central"/>
</dbReference>
<dbReference type="GO" id="GO:0005509">
    <property type="term" value="F:calcium ion binding"/>
    <property type="evidence" value="ECO:0007669"/>
    <property type="project" value="InterPro"/>
</dbReference>
<dbReference type="GO" id="GO:0034332">
    <property type="term" value="P:adherens junction organization"/>
    <property type="evidence" value="ECO:0000318"/>
    <property type="project" value="GO_Central"/>
</dbReference>
<dbReference type="GO" id="GO:0016339">
    <property type="term" value="P:calcium-dependent cell-cell adhesion via plasma membrane cell adhesion molecules"/>
    <property type="evidence" value="ECO:0000318"/>
    <property type="project" value="GO_Central"/>
</dbReference>
<dbReference type="GO" id="GO:0016477">
    <property type="term" value="P:cell migration"/>
    <property type="evidence" value="ECO:0000318"/>
    <property type="project" value="GO_Central"/>
</dbReference>
<dbReference type="GO" id="GO:0000902">
    <property type="term" value="P:cell morphogenesis"/>
    <property type="evidence" value="ECO:0000318"/>
    <property type="project" value="GO_Central"/>
</dbReference>
<dbReference type="GO" id="GO:0044331">
    <property type="term" value="P:cell-cell adhesion mediated by cadherin"/>
    <property type="evidence" value="ECO:0000318"/>
    <property type="project" value="GO_Central"/>
</dbReference>
<dbReference type="GO" id="GO:0007043">
    <property type="term" value="P:cell-cell junction assembly"/>
    <property type="evidence" value="ECO:0000318"/>
    <property type="project" value="GO_Central"/>
</dbReference>
<dbReference type="GO" id="GO:0007156">
    <property type="term" value="P:homophilic cell adhesion via plasma membrane adhesion molecules"/>
    <property type="evidence" value="ECO:0007669"/>
    <property type="project" value="InterPro"/>
</dbReference>
<dbReference type="GO" id="GO:0007219">
    <property type="term" value="P:Notch signaling pathway"/>
    <property type="evidence" value="ECO:0007669"/>
    <property type="project" value="Ensembl"/>
</dbReference>
<dbReference type="GO" id="GO:0099560">
    <property type="term" value="P:synaptic membrane adhesion"/>
    <property type="evidence" value="ECO:0000318"/>
    <property type="project" value="GO_Central"/>
</dbReference>
<dbReference type="CDD" id="cd11304">
    <property type="entry name" value="Cadherin_repeat"/>
    <property type="match status" value="5"/>
</dbReference>
<dbReference type="FunFam" id="2.60.40.60:FF:000297">
    <property type="entry name" value="Cadherin 12"/>
    <property type="match status" value="1"/>
</dbReference>
<dbReference type="FunFam" id="2.60.40.60:FF:000009">
    <property type="entry name" value="Cadherin 24"/>
    <property type="match status" value="1"/>
</dbReference>
<dbReference type="FunFam" id="2.60.40.60:FF:000012">
    <property type="entry name" value="Cadherin 24"/>
    <property type="match status" value="1"/>
</dbReference>
<dbReference type="FunFam" id="2.60.40.60:FF:000017">
    <property type="entry name" value="Cadherin 24"/>
    <property type="match status" value="1"/>
</dbReference>
<dbReference type="FunFam" id="2.60.40.60:FF:000014">
    <property type="entry name" value="Cadherin 8"/>
    <property type="match status" value="1"/>
</dbReference>
<dbReference type="FunFam" id="4.10.900.10:FF:000006">
    <property type="entry name" value="Cadherin-9 preproprotein"/>
    <property type="match status" value="1"/>
</dbReference>
<dbReference type="Gene3D" id="2.60.40.60">
    <property type="entry name" value="Cadherins"/>
    <property type="match status" value="5"/>
</dbReference>
<dbReference type="Gene3D" id="4.10.900.10">
    <property type="entry name" value="TCF3-CBD (Catenin binding domain)"/>
    <property type="match status" value="1"/>
</dbReference>
<dbReference type="InterPro" id="IPR039808">
    <property type="entry name" value="Cadherin"/>
</dbReference>
<dbReference type="InterPro" id="IPR002126">
    <property type="entry name" value="Cadherin-like_dom"/>
</dbReference>
<dbReference type="InterPro" id="IPR015919">
    <property type="entry name" value="Cadherin-like_sf"/>
</dbReference>
<dbReference type="InterPro" id="IPR020894">
    <property type="entry name" value="Cadherin_CS"/>
</dbReference>
<dbReference type="InterPro" id="IPR000233">
    <property type="entry name" value="Cadherin_Y-type_LIR"/>
</dbReference>
<dbReference type="InterPro" id="IPR027397">
    <property type="entry name" value="Catenin-bd_sf"/>
</dbReference>
<dbReference type="PANTHER" id="PTHR24027">
    <property type="entry name" value="CADHERIN-23"/>
    <property type="match status" value="1"/>
</dbReference>
<dbReference type="PANTHER" id="PTHR24027:SF322">
    <property type="entry name" value="CADHERIN-6"/>
    <property type="match status" value="1"/>
</dbReference>
<dbReference type="Pfam" id="PF01049">
    <property type="entry name" value="CADH_Y-type_LIR"/>
    <property type="match status" value="1"/>
</dbReference>
<dbReference type="Pfam" id="PF00028">
    <property type="entry name" value="Cadherin"/>
    <property type="match status" value="5"/>
</dbReference>
<dbReference type="PRINTS" id="PR00205">
    <property type="entry name" value="CADHERIN"/>
</dbReference>
<dbReference type="SMART" id="SM00112">
    <property type="entry name" value="CA"/>
    <property type="match status" value="5"/>
</dbReference>
<dbReference type="SUPFAM" id="SSF49313">
    <property type="entry name" value="Cadherin-like"/>
    <property type="match status" value="5"/>
</dbReference>
<dbReference type="PROSITE" id="PS00232">
    <property type="entry name" value="CADHERIN_1"/>
    <property type="match status" value="3"/>
</dbReference>
<dbReference type="PROSITE" id="PS50268">
    <property type="entry name" value="CADHERIN_2"/>
    <property type="match status" value="5"/>
</dbReference>
<comment type="function">
    <text>Cadherins are calcium-dependent cell adhesion proteins. They preferentially interact with themselves in a homophilic manner in connecting cells; cadherins may thus contribute to the sorting of heterogeneous cell types.</text>
</comment>
<comment type="subcellular location">
    <subcellularLocation>
        <location evidence="6">Cell membrane</location>
        <topology evidence="6">Single-pass type I membrane protein</topology>
    </subcellularLocation>
</comment>
<comment type="developmental stage">
    <text evidence="5">First expressed in splanchnic mesoderm of stage 4 embryos. At stage 6, strongly expressed along the neural fold in a region corresponding to the future neural crest. Expression in the neural fold continues during closure of the neural tube but diminishes after neural crest cells have left the neural tube.</text>
</comment>
<comment type="domain">
    <text evidence="1">Three calcium ions are usually bound at the interface of each cadherin domain and rigidify the connections, imparting a strong curvature to the full-length ectodomain.</text>
</comment>
<feature type="signal peptide" evidence="2">
    <location>
        <begin position="1"/>
        <end position="30"/>
    </location>
</feature>
<feature type="propeptide" id="PRO_0000003767" evidence="2">
    <location>
        <begin position="31"/>
        <end position="53"/>
    </location>
</feature>
<feature type="chain" id="PRO_0000003768" description="Cadherin-6">
    <location>
        <begin position="54"/>
        <end position="790"/>
    </location>
</feature>
<feature type="topological domain" description="Extracellular" evidence="2">
    <location>
        <begin position="54"/>
        <end position="615"/>
    </location>
</feature>
<feature type="transmembrane region" description="Helical" evidence="2">
    <location>
        <begin position="616"/>
        <end position="636"/>
    </location>
</feature>
<feature type="topological domain" description="Cytoplasmic" evidence="2">
    <location>
        <begin position="637"/>
        <end position="790"/>
    </location>
</feature>
<feature type="domain" description="Cadherin 1" evidence="3">
    <location>
        <begin position="54"/>
        <end position="159"/>
    </location>
</feature>
<feature type="domain" description="Cadherin 2" evidence="3">
    <location>
        <begin position="160"/>
        <end position="268"/>
    </location>
</feature>
<feature type="domain" description="Cadherin 3" evidence="3">
    <location>
        <begin position="269"/>
        <end position="383"/>
    </location>
</feature>
<feature type="domain" description="Cadherin 4" evidence="3">
    <location>
        <begin position="384"/>
        <end position="486"/>
    </location>
</feature>
<feature type="domain" description="Cadherin 5" evidence="3">
    <location>
        <begin position="487"/>
        <end position="608"/>
    </location>
</feature>
<feature type="region of interest" description="Disordered" evidence="4">
    <location>
        <begin position="261"/>
        <end position="289"/>
    </location>
</feature>
<feature type="glycosylation site" description="N-linked (GlcNAc...) asparagine" evidence="2">
    <location>
        <position position="165"/>
    </location>
</feature>
<feature type="glycosylation site" description="N-linked (GlcNAc...) asparagine" evidence="2">
    <location>
        <position position="255"/>
    </location>
</feature>
<feature type="glycosylation site" description="N-linked (GlcNAc...) asparagine" evidence="2">
    <location>
        <position position="437"/>
    </location>
</feature>
<feature type="glycosylation site" description="N-linked (GlcNAc...) asparagine" evidence="2">
    <location>
        <position position="455"/>
    </location>
</feature>
<feature type="glycosylation site" description="N-linked (GlcNAc...) asparagine" evidence="2">
    <location>
        <position position="536"/>
    </location>
</feature>
<gene>
    <name type="primary">CDH6</name>
</gene>
<name>CADH6_CHICK</name>
<keyword id="KW-0106">Calcium</keyword>
<keyword id="KW-0130">Cell adhesion</keyword>
<keyword id="KW-1003">Cell membrane</keyword>
<keyword id="KW-0165">Cleavage on pair of basic residues</keyword>
<keyword id="KW-0325">Glycoprotein</keyword>
<keyword id="KW-0472">Membrane</keyword>
<keyword id="KW-0479">Metal-binding</keyword>
<keyword id="KW-1185">Reference proteome</keyword>
<keyword id="KW-0677">Repeat</keyword>
<keyword id="KW-0732">Signal</keyword>
<keyword id="KW-0812">Transmembrane</keyword>
<keyword id="KW-1133">Transmembrane helix</keyword>
<sequence length="790" mass="88660">MRTYHCFWLLFWAGQPHQSFLTLLSKRTSGFPEKEKVLVLSGNSRRDLSRSKRSWMWNQFFLLEEYTGTDYQYVGKLHSDQDKGDGSLKYILSGDGAGDLFIINENTGDIQATKRLDREEKPVYILRAQAINRRTGRPVEPESEFIIKIHDINDNEPMFTKDVYNASIPEMSDVGTFVVQVTATDADDPTYGNSAKVVYSILQGQPYFSVESETGIIKTALLNMDRENREQYQVVIQAKDMGGQMGGLSGTTTVNITLTDVNDNPPRFPQSTYQFRAPESTPPDSPIGRIKANDADVDENAEIEYSITEGDGYDMFGITTDKDTQEGIITVKKALDFENKNLYILKVEATNTHVDPRFLYLGPFKDSATIRIQVEDVDEPPVFSRPAYIIEVKEDVPINSVIGTVTAQDPDAAKNPVKYSVDRHTDMDRVFNINSGNGSIFTSKTLDRETLLWHNITVIAAEINNPKQSSRVPVFIKVLDVNDNAPEFAMFYETFVCENAKAEQLIQTLSAVDKDDSYSGHQFSFSIAPEAASSSNFTLQDNRDNTAGIFTRKIRYNRHEMSTYLLPVVISDNDYPIQSSTETVTIRVCACDHRGKMLSCNAEALIHPTGLSTGALIAILLCIIILLVTVVLFAALRRQRKKEPLIISKEDIRDNIVSYNDEGGGEEDTQAFDIGTLRNPEAIDDNKLRRDIVPETLFMPRRTATARDNTDVRDFINQRLKENDTDPAAPPYDSLATYAYEGNGSVAESLSSLESVTTDGDQDYDYLSDWGPRFKKLADMYGSMDSDKDS</sequence>